<comment type="function">
    <text>Tropomyosin, in association with the troponin complex, plays a central role in the calcium dependent regulation of muscle contraction.</text>
</comment>
<comment type="subunit">
    <text evidence="1">Homodimer.</text>
</comment>
<comment type="domain">
    <text>The molecule is in a coiled coil structure that is formed by 2 polypeptide chains. The sequence exhibits a prominent seven-residues periodicity.</text>
</comment>
<comment type="similarity">
    <text evidence="3">Belongs to the tropomyosin family.</text>
</comment>
<organism>
    <name type="scientific">Biomphalaria glabrata</name>
    <name type="common">Bloodfluke planorb</name>
    <name type="synonym">Freshwater snail</name>
    <dbReference type="NCBI Taxonomy" id="6526"/>
    <lineage>
        <taxon>Eukaryota</taxon>
        <taxon>Metazoa</taxon>
        <taxon>Spiralia</taxon>
        <taxon>Lophotrochozoa</taxon>
        <taxon>Mollusca</taxon>
        <taxon>Gastropoda</taxon>
        <taxon>Heterobranchia</taxon>
        <taxon>Euthyneura</taxon>
        <taxon>Panpulmonata</taxon>
        <taxon>Hygrophila</taxon>
        <taxon>Lymnaeoidea</taxon>
        <taxon>Planorbidae</taxon>
        <taxon>Biomphalaria</taxon>
    </lineage>
</organism>
<feature type="chain" id="PRO_0000205662" description="Tropomyosin-1">
    <location>
        <begin position="1"/>
        <end position="284"/>
    </location>
</feature>
<feature type="region of interest" description="Disordered" evidence="2">
    <location>
        <begin position="103"/>
        <end position="131"/>
    </location>
</feature>
<feature type="coiled-coil region" evidence="1">
    <location>
        <begin position="1"/>
        <end position="284"/>
    </location>
</feature>
<evidence type="ECO:0000250" key="1"/>
<evidence type="ECO:0000256" key="2">
    <source>
        <dbReference type="SAM" id="MobiDB-lite"/>
    </source>
</evidence>
<evidence type="ECO:0000305" key="3"/>
<sequence>MDAIKKKMLAMKMEKENAIDRAEQMEQKLRDVEETKNKLEEEFNNLQNKFSNLQNDFDTANEGLTEAQTKLEASEKHVAELESDTAGLNRRIQLLEEDLERSEERLQSATEKLEEASKAADESERGRKVLESRSLADDERLDGLEAQLKEAKYIAEDAERKYDEAARKLAITEVDLERAEARLEAAEAKVWELDEELHIVGNNIKTLSIQNDQASQREDSYQETIRDLTQRLKDAENRATEAERTVSKLQKEVDRLEDELLAEKERYKSISDELDSTFAELAGY</sequence>
<reference key="1">
    <citation type="journal article" date="1990" name="Mol. Biochem. Parasitol.">
        <title>Structural homology of tropomyosins from the human trematode Schistosoma mansoni and its intermediate host Biomphalaria glabrata.</title>
        <authorList>
            <person name="Dissous C."/>
            <person name="Torpier G."/>
            <person name="Duvaux-Miret O."/>
            <person name="Capron A."/>
        </authorList>
    </citation>
    <scope>NUCLEOTIDE SEQUENCE [MRNA]</scope>
</reference>
<accession>P42636</accession>
<keyword id="KW-0175">Coiled coil</keyword>
<keyword id="KW-1185">Reference proteome</keyword>
<keyword id="KW-0677">Repeat</keyword>
<proteinExistence type="evidence at transcript level"/>
<protein>
    <recommendedName>
        <fullName>Tropomyosin-1</fullName>
    </recommendedName>
    <alternativeName>
        <fullName>Bg 39</fullName>
    </alternativeName>
    <alternativeName>
        <fullName>Tropomyosin I</fullName>
        <shortName>BgTMI</shortName>
        <shortName>TMI</shortName>
    </alternativeName>
</protein>
<name>TPM1_BIOGL</name>
<dbReference type="EMBL" id="M85199">
    <property type="protein sequence ID" value="AAA27817.1"/>
    <property type="molecule type" value="mRNA"/>
</dbReference>
<dbReference type="PIR" id="A33085">
    <property type="entry name" value="A33085"/>
</dbReference>
<dbReference type="SMR" id="P42636"/>
<dbReference type="STRING" id="6526.P42636"/>
<dbReference type="VEuPathDB" id="VectorBase:BGLAX_039222"/>
<dbReference type="VEuPathDB" id="VectorBase:BGLB011792"/>
<dbReference type="Proteomes" id="UP000076420">
    <property type="component" value="Unassembled WGS sequence"/>
</dbReference>
<dbReference type="Proteomes" id="UP001165740">
    <property type="component" value="Unplaced"/>
</dbReference>
<dbReference type="FunFam" id="1.20.5.170:FF:000005">
    <property type="entry name" value="Tropomyosin alpha-1 chain"/>
    <property type="match status" value="1"/>
</dbReference>
<dbReference type="FunFam" id="1.20.5.170:FF:000001">
    <property type="entry name" value="Tropomyosin alpha-1 chain isoform 1"/>
    <property type="match status" value="1"/>
</dbReference>
<dbReference type="FunFam" id="1.20.5.340:FF:000001">
    <property type="entry name" value="Tropomyosin alpha-1 chain isoform 2"/>
    <property type="match status" value="1"/>
</dbReference>
<dbReference type="Gene3D" id="1.20.5.170">
    <property type="match status" value="2"/>
</dbReference>
<dbReference type="Gene3D" id="1.20.5.340">
    <property type="match status" value="1"/>
</dbReference>
<dbReference type="InterPro" id="IPR000533">
    <property type="entry name" value="Tropomyosin"/>
</dbReference>
<dbReference type="PANTHER" id="PTHR19269">
    <property type="entry name" value="TROPOMYOSIN"/>
    <property type="match status" value="1"/>
</dbReference>
<dbReference type="Pfam" id="PF00261">
    <property type="entry name" value="Tropomyosin"/>
    <property type="match status" value="1"/>
</dbReference>
<dbReference type="PRINTS" id="PR00194">
    <property type="entry name" value="TROPOMYOSIN"/>
</dbReference>
<dbReference type="SUPFAM" id="SSF57997">
    <property type="entry name" value="Tropomyosin"/>
    <property type="match status" value="1"/>
</dbReference>
<dbReference type="PROSITE" id="PS00326">
    <property type="entry name" value="TROPOMYOSIN"/>
    <property type="match status" value="1"/>
</dbReference>